<protein>
    <recommendedName>
        <fullName evidence="1">Structure-specific endonuclease subunit slx1</fullName>
        <ecNumber evidence="1">3.1.-.-</ecNumber>
    </recommendedName>
</protein>
<evidence type="ECO:0000255" key="1">
    <source>
        <dbReference type="HAMAP-Rule" id="MF_03100"/>
    </source>
</evidence>
<evidence type="ECO:0000256" key="2">
    <source>
        <dbReference type="SAM" id="MobiDB-lite"/>
    </source>
</evidence>
<name>SLX1_ASPTN</name>
<accession>Q0CE14</accession>
<dbReference type="EC" id="3.1.-.-" evidence="1"/>
<dbReference type="EMBL" id="CH476605">
    <property type="protein sequence ID" value="EAU31243.1"/>
    <property type="molecule type" value="Genomic_DNA"/>
</dbReference>
<dbReference type="RefSeq" id="XP_001216691.1">
    <property type="nucleotide sequence ID" value="XM_001216691.1"/>
</dbReference>
<dbReference type="SMR" id="Q0CE14"/>
<dbReference type="STRING" id="341663.Q0CE14"/>
<dbReference type="EnsemblFungi" id="EAU31243">
    <property type="protein sequence ID" value="EAU31243"/>
    <property type="gene ID" value="ATEG_08070"/>
</dbReference>
<dbReference type="GeneID" id="4353406"/>
<dbReference type="VEuPathDB" id="FungiDB:ATEG_08070"/>
<dbReference type="eggNOG" id="KOG3005">
    <property type="taxonomic scope" value="Eukaryota"/>
</dbReference>
<dbReference type="HOGENOM" id="CLU_030739_1_0_1"/>
<dbReference type="OMA" id="HNRGCDF"/>
<dbReference type="OrthoDB" id="24645at2759"/>
<dbReference type="Proteomes" id="UP000007963">
    <property type="component" value="Unassembled WGS sequence"/>
</dbReference>
<dbReference type="GO" id="GO:0033557">
    <property type="term" value="C:Slx1-Slx4 complex"/>
    <property type="evidence" value="ECO:0007669"/>
    <property type="project" value="UniProtKB-UniRule"/>
</dbReference>
<dbReference type="GO" id="GO:0017108">
    <property type="term" value="F:5'-flap endonuclease activity"/>
    <property type="evidence" value="ECO:0007669"/>
    <property type="project" value="InterPro"/>
</dbReference>
<dbReference type="GO" id="GO:0008821">
    <property type="term" value="F:crossover junction DNA endonuclease activity"/>
    <property type="evidence" value="ECO:0007669"/>
    <property type="project" value="TreeGrafter"/>
</dbReference>
<dbReference type="GO" id="GO:0008270">
    <property type="term" value="F:zinc ion binding"/>
    <property type="evidence" value="ECO:0007669"/>
    <property type="project" value="UniProtKB-KW"/>
</dbReference>
<dbReference type="GO" id="GO:0000724">
    <property type="term" value="P:double-strand break repair via homologous recombination"/>
    <property type="evidence" value="ECO:0007669"/>
    <property type="project" value="TreeGrafter"/>
</dbReference>
<dbReference type="CDD" id="cd10455">
    <property type="entry name" value="GIY-YIG_SLX1"/>
    <property type="match status" value="1"/>
</dbReference>
<dbReference type="Gene3D" id="3.40.1440.10">
    <property type="entry name" value="GIY-YIG endonuclease"/>
    <property type="match status" value="1"/>
</dbReference>
<dbReference type="Gene3D" id="3.30.40.10">
    <property type="entry name" value="Zinc/RING finger domain, C3HC4 (zinc finger)"/>
    <property type="match status" value="1"/>
</dbReference>
<dbReference type="HAMAP" id="MF_03100">
    <property type="entry name" value="Endonuc_su_Slx1"/>
    <property type="match status" value="1"/>
</dbReference>
<dbReference type="InterPro" id="IPR000305">
    <property type="entry name" value="GIY-YIG_endonuc"/>
</dbReference>
<dbReference type="InterPro" id="IPR035901">
    <property type="entry name" value="GIY-YIG_endonuc_sf"/>
</dbReference>
<dbReference type="InterPro" id="IPR027520">
    <property type="entry name" value="Slx1"/>
</dbReference>
<dbReference type="InterPro" id="IPR048749">
    <property type="entry name" value="SLX1_C"/>
</dbReference>
<dbReference type="InterPro" id="IPR050381">
    <property type="entry name" value="SLX1_endonuclease"/>
</dbReference>
<dbReference type="InterPro" id="IPR013083">
    <property type="entry name" value="Znf_RING/FYVE/PHD"/>
</dbReference>
<dbReference type="PANTHER" id="PTHR20208">
    <property type="entry name" value="STRUCTURE-SPECIFIC ENDONUCLEASE SUBUNIT SLX1"/>
    <property type="match status" value="1"/>
</dbReference>
<dbReference type="PANTHER" id="PTHR20208:SF10">
    <property type="entry name" value="STRUCTURE-SPECIFIC ENDONUCLEASE SUBUNIT SLX1"/>
    <property type="match status" value="1"/>
</dbReference>
<dbReference type="Pfam" id="PF01541">
    <property type="entry name" value="GIY-YIG"/>
    <property type="match status" value="1"/>
</dbReference>
<dbReference type="Pfam" id="PF21202">
    <property type="entry name" value="SLX1_C"/>
    <property type="match status" value="1"/>
</dbReference>
<dbReference type="SUPFAM" id="SSF82771">
    <property type="entry name" value="GIY-YIG endonuclease"/>
    <property type="match status" value="1"/>
</dbReference>
<dbReference type="PROSITE" id="PS50164">
    <property type="entry name" value="GIY_YIG"/>
    <property type="match status" value="1"/>
</dbReference>
<organism>
    <name type="scientific">Aspergillus terreus (strain NIH 2624 / FGSC A1156)</name>
    <dbReference type="NCBI Taxonomy" id="341663"/>
    <lineage>
        <taxon>Eukaryota</taxon>
        <taxon>Fungi</taxon>
        <taxon>Dikarya</taxon>
        <taxon>Ascomycota</taxon>
        <taxon>Pezizomycotina</taxon>
        <taxon>Eurotiomycetes</taxon>
        <taxon>Eurotiomycetidae</taxon>
        <taxon>Eurotiales</taxon>
        <taxon>Aspergillaceae</taxon>
        <taxon>Aspergillus</taxon>
        <taxon>Aspergillus subgen. Circumdati</taxon>
    </lineage>
</organism>
<comment type="function">
    <text evidence="1">Catalytic subunit of the slx1-slx4 structure-specific endonuclease that resolves DNA secondary structures generated during DNA repair and recombination. Has endonuclease activity towards branched DNA substrates, introducing single-strand cuts in duplex DNA close to junctions with ss-DNA.</text>
</comment>
<comment type="cofactor">
    <cofactor evidence="1">
        <name>a divalent metal cation</name>
        <dbReference type="ChEBI" id="CHEBI:60240"/>
    </cofactor>
</comment>
<comment type="subunit">
    <text evidence="1">Forms a heterodimer with slx4.</text>
</comment>
<comment type="subcellular location">
    <subcellularLocation>
        <location evidence="1">Nucleus</location>
    </subcellularLocation>
</comment>
<comment type="similarity">
    <text evidence="1">Belongs to the SLX1 family.</text>
</comment>
<reference key="1">
    <citation type="submission" date="2005-09" db="EMBL/GenBank/DDBJ databases">
        <title>Annotation of the Aspergillus terreus NIH2624 genome.</title>
        <authorList>
            <person name="Birren B.W."/>
            <person name="Lander E.S."/>
            <person name="Galagan J.E."/>
            <person name="Nusbaum C."/>
            <person name="Devon K."/>
            <person name="Henn M."/>
            <person name="Ma L.-J."/>
            <person name="Jaffe D.B."/>
            <person name="Butler J."/>
            <person name="Alvarez P."/>
            <person name="Gnerre S."/>
            <person name="Grabherr M."/>
            <person name="Kleber M."/>
            <person name="Mauceli E.W."/>
            <person name="Brockman W."/>
            <person name="Rounsley S."/>
            <person name="Young S.K."/>
            <person name="LaButti K."/>
            <person name="Pushparaj V."/>
            <person name="DeCaprio D."/>
            <person name="Crawford M."/>
            <person name="Koehrsen M."/>
            <person name="Engels R."/>
            <person name="Montgomery P."/>
            <person name="Pearson M."/>
            <person name="Howarth C."/>
            <person name="Larson L."/>
            <person name="Luoma S."/>
            <person name="White J."/>
            <person name="Alvarado L."/>
            <person name="Kodira C.D."/>
            <person name="Zeng Q."/>
            <person name="Oleary S."/>
            <person name="Yandava C."/>
            <person name="Denning D.W."/>
            <person name="Nierman W.C."/>
            <person name="Milne T."/>
            <person name="Madden K."/>
        </authorList>
    </citation>
    <scope>NUCLEOTIDE SEQUENCE [LARGE SCALE GENOMIC DNA]</scope>
    <source>
        <strain>NIH 2624 / FGSC A1156</strain>
    </source>
</reference>
<sequence>MDNVDSDQTKPIPAYYCCYLLRSTVNKRAGLYVGSTPNPPRRLPQHNGLSKGGAKKTATKNRPWEMVLLVEGFMSRTAALQFEWAWQHEDSRHMSKGEPGNTKRRQRPRRSLTANLEKLHSLLQSPCFSRWPLNIRIFASDVYQLWRVWCDRANGTIPEHIRTIPDGNCPHNSPEPETDHPRVGSIDGIQTDYSKIQDYLEKAVFLLDDPNELHCKVCEAQAKPEKELVIVCPQASCFGISHLLCLSARFLKSSNDPNQLVPRSGTCPACSKLVQWPLMMQELSFRTRGGKEVQVILRKKARSDKRKAAAARPAEIDANTASNEPLESTAQAFDRLNENVHQDVLDEDWAEELDCASEDDTNERLKTGSKDQQRVEIVIEDSDEDDLEFL</sequence>
<feature type="chain" id="PRO_0000383777" description="Structure-specific endonuclease subunit slx1">
    <location>
        <begin position="1"/>
        <end position="390"/>
    </location>
</feature>
<feature type="domain" description="GIY-YIG" evidence="1">
    <location>
        <begin position="14"/>
        <end position="99"/>
    </location>
</feature>
<feature type="zinc finger region" description="SLX1-type" evidence="1">
    <location>
        <begin position="215"/>
        <end position="270"/>
    </location>
</feature>
<feature type="region of interest" description="Disordered" evidence="2">
    <location>
        <begin position="35"/>
        <end position="58"/>
    </location>
</feature>
<feature type="region of interest" description="Disordered" evidence="2">
    <location>
        <begin position="307"/>
        <end position="326"/>
    </location>
</feature>
<feature type="region of interest" description="Disordered" evidence="2">
    <location>
        <begin position="357"/>
        <end position="378"/>
    </location>
</feature>
<feature type="compositionally biased region" description="Basic and acidic residues" evidence="2">
    <location>
        <begin position="362"/>
        <end position="374"/>
    </location>
</feature>
<gene>
    <name type="primary">slx1</name>
    <name type="ORF">ATEG_08070</name>
</gene>
<proteinExistence type="inferred from homology"/>
<keyword id="KW-0227">DNA damage</keyword>
<keyword id="KW-0233">DNA recombination</keyword>
<keyword id="KW-0234">DNA repair</keyword>
<keyword id="KW-0255">Endonuclease</keyword>
<keyword id="KW-0378">Hydrolase</keyword>
<keyword id="KW-0479">Metal-binding</keyword>
<keyword id="KW-0540">Nuclease</keyword>
<keyword id="KW-0539">Nucleus</keyword>
<keyword id="KW-1185">Reference proteome</keyword>
<keyword id="KW-0862">Zinc</keyword>
<keyword id="KW-0863">Zinc-finger</keyword>